<sequence>MKFVDEVSIHVKAGDGGNGLMSFRREKFIEKGGPNGGDGGDGGSIYLEADVNLNTLVDYRYTRRFDAQRGENGGSKDCTGAKGDDLVLPVPVGTTVIDANTQEIIGDLTEPGQRLMVAQGGWHGLGNTRFKSSTNRAPRQTTPGKPGEARDLKLELKVLADVGLLGLPNAGKSTFIRAVSAAKPKVADYPFTTLVPNLGVVSVGRYKSFVVADIPGLIEGAAEGAGLGIRFLKHLARTRILLHLVDMAPLDESDPADAAEVIVRELGRFSPALTERERWLVLNKMDQILDPAERDARKQAVIERLGWEGPVYVISALERDGTEALSQDIMRYLDERTLRLEEDPQYAEELAELDQRIEDEARARLQALDDARALRRSGLKNAGAADDDDFDDEEDDGDGPEIFYVP</sequence>
<feature type="chain" id="PRO_0000386152" description="GTPase Obg">
    <location>
        <begin position="1"/>
        <end position="406"/>
    </location>
</feature>
<feature type="domain" description="Obg" evidence="2">
    <location>
        <begin position="1"/>
        <end position="159"/>
    </location>
</feature>
<feature type="domain" description="OBG-type G" evidence="1">
    <location>
        <begin position="160"/>
        <end position="334"/>
    </location>
</feature>
<feature type="region of interest" description="Disordered" evidence="3">
    <location>
        <begin position="127"/>
        <end position="148"/>
    </location>
</feature>
<feature type="region of interest" description="Disordered" evidence="3">
    <location>
        <begin position="378"/>
        <end position="406"/>
    </location>
</feature>
<feature type="compositionally biased region" description="Polar residues" evidence="3">
    <location>
        <begin position="129"/>
        <end position="143"/>
    </location>
</feature>
<feature type="compositionally biased region" description="Acidic residues" evidence="3">
    <location>
        <begin position="385"/>
        <end position="399"/>
    </location>
</feature>
<feature type="binding site" evidence="1">
    <location>
        <begin position="166"/>
        <end position="173"/>
    </location>
    <ligand>
        <name>GTP</name>
        <dbReference type="ChEBI" id="CHEBI:37565"/>
    </ligand>
</feature>
<feature type="binding site" evidence="1">
    <location>
        <position position="173"/>
    </location>
    <ligand>
        <name>Mg(2+)</name>
        <dbReference type="ChEBI" id="CHEBI:18420"/>
    </ligand>
</feature>
<feature type="binding site" evidence="1">
    <location>
        <begin position="191"/>
        <end position="195"/>
    </location>
    <ligand>
        <name>GTP</name>
        <dbReference type="ChEBI" id="CHEBI:37565"/>
    </ligand>
</feature>
<feature type="binding site" evidence="1">
    <location>
        <position position="193"/>
    </location>
    <ligand>
        <name>Mg(2+)</name>
        <dbReference type="ChEBI" id="CHEBI:18420"/>
    </ligand>
</feature>
<feature type="binding site" evidence="1">
    <location>
        <begin position="213"/>
        <end position="216"/>
    </location>
    <ligand>
        <name>GTP</name>
        <dbReference type="ChEBI" id="CHEBI:37565"/>
    </ligand>
</feature>
<feature type="binding site" evidence="1">
    <location>
        <begin position="283"/>
        <end position="286"/>
    </location>
    <ligand>
        <name>GTP</name>
        <dbReference type="ChEBI" id="CHEBI:37565"/>
    </ligand>
</feature>
<feature type="binding site" evidence="1">
    <location>
        <begin position="315"/>
        <end position="317"/>
    </location>
    <ligand>
        <name>GTP</name>
        <dbReference type="ChEBI" id="CHEBI:37565"/>
    </ligand>
</feature>
<organism>
    <name type="scientific">Pseudomonas paraeruginosa (strain DSM 24068 / PA7)</name>
    <name type="common">Pseudomonas aeruginosa (strain PA7)</name>
    <dbReference type="NCBI Taxonomy" id="381754"/>
    <lineage>
        <taxon>Bacteria</taxon>
        <taxon>Pseudomonadati</taxon>
        <taxon>Pseudomonadota</taxon>
        <taxon>Gammaproteobacteria</taxon>
        <taxon>Pseudomonadales</taxon>
        <taxon>Pseudomonadaceae</taxon>
        <taxon>Pseudomonas</taxon>
        <taxon>Pseudomonas paraeruginosa</taxon>
    </lineage>
</organism>
<accession>A6VBV3</accession>
<protein>
    <recommendedName>
        <fullName evidence="1">GTPase Obg</fullName>
        <ecNumber evidence="1">3.6.5.-</ecNumber>
    </recommendedName>
    <alternativeName>
        <fullName evidence="1">GTP-binding protein Obg</fullName>
    </alternativeName>
</protein>
<comment type="function">
    <text evidence="1">An essential GTPase which binds GTP, GDP and possibly (p)ppGpp with moderate affinity, with high nucleotide exchange rates and a fairly low GTP hydrolysis rate. Plays a role in control of the cell cycle, stress response, ribosome biogenesis and in those bacteria that undergo differentiation, in morphogenesis control.</text>
</comment>
<comment type="cofactor">
    <cofactor evidence="1">
        <name>Mg(2+)</name>
        <dbReference type="ChEBI" id="CHEBI:18420"/>
    </cofactor>
</comment>
<comment type="subunit">
    <text evidence="1">Monomer.</text>
</comment>
<comment type="subcellular location">
    <subcellularLocation>
        <location evidence="1">Cytoplasm</location>
    </subcellularLocation>
</comment>
<comment type="similarity">
    <text evidence="1">Belongs to the TRAFAC class OBG-HflX-like GTPase superfamily. OBG GTPase family.</text>
</comment>
<keyword id="KW-0963">Cytoplasm</keyword>
<keyword id="KW-0342">GTP-binding</keyword>
<keyword id="KW-0378">Hydrolase</keyword>
<keyword id="KW-0460">Magnesium</keyword>
<keyword id="KW-0479">Metal-binding</keyword>
<keyword id="KW-0547">Nucleotide-binding</keyword>
<gene>
    <name evidence="1" type="primary">obg</name>
    <name type="ordered locus">PSPA7_5206</name>
</gene>
<proteinExistence type="inferred from homology"/>
<evidence type="ECO:0000255" key="1">
    <source>
        <dbReference type="HAMAP-Rule" id="MF_01454"/>
    </source>
</evidence>
<evidence type="ECO:0000255" key="2">
    <source>
        <dbReference type="PROSITE-ProRule" id="PRU01231"/>
    </source>
</evidence>
<evidence type="ECO:0000256" key="3">
    <source>
        <dbReference type="SAM" id="MobiDB-lite"/>
    </source>
</evidence>
<reference key="1">
    <citation type="submission" date="2007-06" db="EMBL/GenBank/DDBJ databases">
        <authorList>
            <person name="Dodson R.J."/>
            <person name="Harkins D."/>
            <person name="Paulsen I.T."/>
        </authorList>
    </citation>
    <scope>NUCLEOTIDE SEQUENCE [LARGE SCALE GENOMIC DNA]</scope>
    <source>
        <strain>DSM 24068 / PA7</strain>
    </source>
</reference>
<dbReference type="EC" id="3.6.5.-" evidence="1"/>
<dbReference type="EMBL" id="CP000744">
    <property type="protein sequence ID" value="ABR82388.1"/>
    <property type="molecule type" value="Genomic_DNA"/>
</dbReference>
<dbReference type="RefSeq" id="WP_012077318.1">
    <property type="nucleotide sequence ID" value="NC_009656.1"/>
</dbReference>
<dbReference type="SMR" id="A6VBV3"/>
<dbReference type="KEGG" id="pap:PSPA7_5206"/>
<dbReference type="HOGENOM" id="CLU_011747_2_0_6"/>
<dbReference type="Proteomes" id="UP000001582">
    <property type="component" value="Chromosome"/>
</dbReference>
<dbReference type="GO" id="GO:0005737">
    <property type="term" value="C:cytoplasm"/>
    <property type="evidence" value="ECO:0007669"/>
    <property type="project" value="UniProtKB-SubCell"/>
</dbReference>
<dbReference type="GO" id="GO:0005525">
    <property type="term" value="F:GTP binding"/>
    <property type="evidence" value="ECO:0007669"/>
    <property type="project" value="UniProtKB-UniRule"/>
</dbReference>
<dbReference type="GO" id="GO:0003924">
    <property type="term" value="F:GTPase activity"/>
    <property type="evidence" value="ECO:0007669"/>
    <property type="project" value="UniProtKB-UniRule"/>
</dbReference>
<dbReference type="GO" id="GO:0000287">
    <property type="term" value="F:magnesium ion binding"/>
    <property type="evidence" value="ECO:0007669"/>
    <property type="project" value="InterPro"/>
</dbReference>
<dbReference type="GO" id="GO:0042254">
    <property type="term" value="P:ribosome biogenesis"/>
    <property type="evidence" value="ECO:0007669"/>
    <property type="project" value="UniProtKB-UniRule"/>
</dbReference>
<dbReference type="CDD" id="cd01898">
    <property type="entry name" value="Obg"/>
    <property type="match status" value="1"/>
</dbReference>
<dbReference type="FunFam" id="2.70.210.12:FF:000001">
    <property type="entry name" value="GTPase Obg"/>
    <property type="match status" value="1"/>
</dbReference>
<dbReference type="FunFam" id="3.40.50.300:FF:000185">
    <property type="entry name" value="GTPase Obg"/>
    <property type="match status" value="1"/>
</dbReference>
<dbReference type="Gene3D" id="2.70.210.12">
    <property type="entry name" value="GTP1/OBG domain"/>
    <property type="match status" value="1"/>
</dbReference>
<dbReference type="Gene3D" id="3.40.50.300">
    <property type="entry name" value="P-loop containing nucleotide triphosphate hydrolases"/>
    <property type="match status" value="1"/>
</dbReference>
<dbReference type="HAMAP" id="MF_01454">
    <property type="entry name" value="GTPase_Obg"/>
    <property type="match status" value="1"/>
</dbReference>
<dbReference type="InterPro" id="IPR031167">
    <property type="entry name" value="G_OBG"/>
</dbReference>
<dbReference type="InterPro" id="IPR006073">
    <property type="entry name" value="GTP-bd"/>
</dbReference>
<dbReference type="InterPro" id="IPR014100">
    <property type="entry name" value="GTP-bd_Obg/CgtA"/>
</dbReference>
<dbReference type="InterPro" id="IPR006074">
    <property type="entry name" value="GTP1-OBG_CS"/>
</dbReference>
<dbReference type="InterPro" id="IPR006169">
    <property type="entry name" value="GTP1_OBG_dom"/>
</dbReference>
<dbReference type="InterPro" id="IPR036726">
    <property type="entry name" value="GTP1_OBG_dom_sf"/>
</dbReference>
<dbReference type="InterPro" id="IPR045086">
    <property type="entry name" value="OBG_GTPase"/>
</dbReference>
<dbReference type="InterPro" id="IPR027417">
    <property type="entry name" value="P-loop_NTPase"/>
</dbReference>
<dbReference type="NCBIfam" id="TIGR02729">
    <property type="entry name" value="Obg_CgtA"/>
    <property type="match status" value="1"/>
</dbReference>
<dbReference type="NCBIfam" id="NF008955">
    <property type="entry name" value="PRK12297.1"/>
    <property type="match status" value="1"/>
</dbReference>
<dbReference type="NCBIfam" id="NF008956">
    <property type="entry name" value="PRK12299.1"/>
    <property type="match status" value="1"/>
</dbReference>
<dbReference type="PANTHER" id="PTHR11702">
    <property type="entry name" value="DEVELOPMENTALLY REGULATED GTP-BINDING PROTEIN-RELATED"/>
    <property type="match status" value="1"/>
</dbReference>
<dbReference type="PANTHER" id="PTHR11702:SF31">
    <property type="entry name" value="MITOCHONDRIAL RIBOSOME-ASSOCIATED GTPASE 2"/>
    <property type="match status" value="1"/>
</dbReference>
<dbReference type="Pfam" id="PF01018">
    <property type="entry name" value="GTP1_OBG"/>
    <property type="match status" value="1"/>
</dbReference>
<dbReference type="Pfam" id="PF01926">
    <property type="entry name" value="MMR_HSR1"/>
    <property type="match status" value="1"/>
</dbReference>
<dbReference type="PIRSF" id="PIRSF002401">
    <property type="entry name" value="GTP_bd_Obg/CgtA"/>
    <property type="match status" value="1"/>
</dbReference>
<dbReference type="PRINTS" id="PR00326">
    <property type="entry name" value="GTP1OBG"/>
</dbReference>
<dbReference type="SUPFAM" id="SSF82051">
    <property type="entry name" value="Obg GTP-binding protein N-terminal domain"/>
    <property type="match status" value="1"/>
</dbReference>
<dbReference type="SUPFAM" id="SSF52540">
    <property type="entry name" value="P-loop containing nucleoside triphosphate hydrolases"/>
    <property type="match status" value="1"/>
</dbReference>
<dbReference type="PROSITE" id="PS51710">
    <property type="entry name" value="G_OBG"/>
    <property type="match status" value="1"/>
</dbReference>
<dbReference type="PROSITE" id="PS00905">
    <property type="entry name" value="GTP1_OBG"/>
    <property type="match status" value="1"/>
</dbReference>
<dbReference type="PROSITE" id="PS51883">
    <property type="entry name" value="OBG"/>
    <property type="match status" value="1"/>
</dbReference>
<name>OBG_PSEP7</name>